<evidence type="ECO:0000255" key="1">
    <source>
        <dbReference type="HAMAP-Rule" id="MF_00270"/>
    </source>
</evidence>
<evidence type="ECO:0000305" key="2"/>
<protein>
    <recommendedName>
        <fullName evidence="1">Small ribosomal subunit protein bS18</fullName>
    </recommendedName>
    <alternativeName>
        <fullName evidence="2">30S ribosomal protein S18</fullName>
    </alternativeName>
</protein>
<reference key="1">
    <citation type="journal article" date="2006" name="PLoS Biol.">
        <title>Metabolic complementarity and genomics of the dual bacterial symbiosis of sharpshooters.</title>
        <authorList>
            <person name="Wu D."/>
            <person name="Daugherty S.C."/>
            <person name="Van Aken S.E."/>
            <person name="Pai G.H."/>
            <person name="Watkins K.L."/>
            <person name="Khouri H."/>
            <person name="Tallon L.J."/>
            <person name="Zaborsky J.M."/>
            <person name="Dunbar H.E."/>
            <person name="Tran P.L."/>
            <person name="Moran N.A."/>
            <person name="Eisen J.A."/>
        </authorList>
    </citation>
    <scope>NUCLEOTIDE SEQUENCE [LARGE SCALE GENOMIC DNA]</scope>
</reference>
<proteinExistence type="inferred from homology"/>
<dbReference type="EMBL" id="CP000238">
    <property type="protein sequence ID" value="ABF14328.1"/>
    <property type="molecule type" value="Genomic_DNA"/>
</dbReference>
<dbReference type="RefSeq" id="WP_011520733.1">
    <property type="nucleotide sequence ID" value="NC_007984.1"/>
</dbReference>
<dbReference type="SMR" id="Q1LSR4"/>
<dbReference type="STRING" id="374463.BCI_0572"/>
<dbReference type="KEGG" id="bci:BCI_0572"/>
<dbReference type="HOGENOM" id="CLU_148710_2_3_6"/>
<dbReference type="OrthoDB" id="9812008at2"/>
<dbReference type="Proteomes" id="UP000002427">
    <property type="component" value="Chromosome"/>
</dbReference>
<dbReference type="GO" id="GO:0022627">
    <property type="term" value="C:cytosolic small ribosomal subunit"/>
    <property type="evidence" value="ECO:0007669"/>
    <property type="project" value="TreeGrafter"/>
</dbReference>
<dbReference type="GO" id="GO:0070181">
    <property type="term" value="F:small ribosomal subunit rRNA binding"/>
    <property type="evidence" value="ECO:0007669"/>
    <property type="project" value="TreeGrafter"/>
</dbReference>
<dbReference type="GO" id="GO:0003735">
    <property type="term" value="F:structural constituent of ribosome"/>
    <property type="evidence" value="ECO:0007669"/>
    <property type="project" value="InterPro"/>
</dbReference>
<dbReference type="GO" id="GO:0006412">
    <property type="term" value="P:translation"/>
    <property type="evidence" value="ECO:0007669"/>
    <property type="project" value="UniProtKB-UniRule"/>
</dbReference>
<dbReference type="FunFam" id="4.10.640.10:FF:000001">
    <property type="entry name" value="30S ribosomal protein S18"/>
    <property type="match status" value="1"/>
</dbReference>
<dbReference type="Gene3D" id="4.10.640.10">
    <property type="entry name" value="Ribosomal protein S18"/>
    <property type="match status" value="1"/>
</dbReference>
<dbReference type="HAMAP" id="MF_00270">
    <property type="entry name" value="Ribosomal_bS18"/>
    <property type="match status" value="1"/>
</dbReference>
<dbReference type="InterPro" id="IPR001648">
    <property type="entry name" value="Ribosomal_bS18"/>
</dbReference>
<dbReference type="InterPro" id="IPR018275">
    <property type="entry name" value="Ribosomal_bS18_CS"/>
</dbReference>
<dbReference type="InterPro" id="IPR036870">
    <property type="entry name" value="Ribosomal_bS18_sf"/>
</dbReference>
<dbReference type="NCBIfam" id="TIGR00165">
    <property type="entry name" value="S18"/>
    <property type="match status" value="1"/>
</dbReference>
<dbReference type="PANTHER" id="PTHR13479">
    <property type="entry name" value="30S RIBOSOMAL PROTEIN S18"/>
    <property type="match status" value="1"/>
</dbReference>
<dbReference type="PANTHER" id="PTHR13479:SF40">
    <property type="entry name" value="SMALL RIBOSOMAL SUBUNIT PROTEIN BS18M"/>
    <property type="match status" value="1"/>
</dbReference>
<dbReference type="Pfam" id="PF01084">
    <property type="entry name" value="Ribosomal_S18"/>
    <property type="match status" value="1"/>
</dbReference>
<dbReference type="PRINTS" id="PR00974">
    <property type="entry name" value="RIBOSOMALS18"/>
</dbReference>
<dbReference type="SUPFAM" id="SSF46911">
    <property type="entry name" value="Ribosomal protein S18"/>
    <property type="match status" value="1"/>
</dbReference>
<dbReference type="PROSITE" id="PS00057">
    <property type="entry name" value="RIBOSOMAL_S18"/>
    <property type="match status" value="1"/>
</dbReference>
<accession>Q1LSR4</accession>
<gene>
    <name evidence="1" type="primary">rpsR</name>
    <name type="ordered locus">BCI_0572</name>
</gene>
<feature type="chain" id="PRO_1000003447" description="Small ribosomal subunit protein bS18">
    <location>
        <begin position="1"/>
        <end position="75"/>
    </location>
</feature>
<keyword id="KW-1185">Reference proteome</keyword>
<keyword id="KW-0687">Ribonucleoprotein</keyword>
<keyword id="KW-0689">Ribosomal protein</keyword>
<keyword id="KW-0694">RNA-binding</keyword>
<keyword id="KW-0699">rRNA-binding</keyword>
<organism>
    <name type="scientific">Baumannia cicadellinicola subsp. Homalodisca coagulata</name>
    <dbReference type="NCBI Taxonomy" id="374463"/>
    <lineage>
        <taxon>Bacteria</taxon>
        <taxon>Pseudomonadati</taxon>
        <taxon>Pseudomonadota</taxon>
        <taxon>Gammaproteobacteria</taxon>
        <taxon>Candidatus Palibaumannia</taxon>
    </lineage>
</organism>
<comment type="function">
    <text evidence="1">Binds as a heterodimer with protein bS6 to the central domain of the 16S rRNA, where it helps stabilize the platform of the 30S subunit.</text>
</comment>
<comment type="subunit">
    <text evidence="1">Part of the 30S ribosomal subunit. Forms a tight heterodimer with protein bS6.</text>
</comment>
<comment type="similarity">
    <text evidence="1">Belongs to the bacterial ribosomal protein bS18 family.</text>
</comment>
<name>RS18_BAUCH</name>
<sequence length="75" mass="8986">MARYFRRRKFCRFTAEDVIEIDYKDIATLKNYITESGKIVPSRITGTRAKYQRQLARAIKRARYLSLLPYTDLHQ</sequence>